<organism>
    <name type="scientific">Desulfurococcus amylolyticus (strain DSM 18924 / JCM 16383 / VKM B-2413 / 1221n)</name>
    <name type="common">Desulfurococcus kamchatkensis</name>
    <dbReference type="NCBI Taxonomy" id="490899"/>
    <lineage>
        <taxon>Archaea</taxon>
        <taxon>Thermoproteota</taxon>
        <taxon>Thermoprotei</taxon>
        <taxon>Desulfurococcales</taxon>
        <taxon>Desulfurococcaceae</taxon>
        <taxon>Desulfurococcus</taxon>
    </lineage>
</organism>
<evidence type="ECO:0000255" key="1">
    <source>
        <dbReference type="HAMAP-Rule" id="MF_01371"/>
    </source>
</evidence>
<evidence type="ECO:0000305" key="2"/>
<protein>
    <recommendedName>
        <fullName evidence="1">Large ribosomal subunit protein uL30</fullName>
    </recommendedName>
    <alternativeName>
        <fullName evidence="2">50S ribosomal protein L30</fullName>
    </alternativeName>
</protein>
<reference key="1">
    <citation type="journal article" date="2009" name="J. Bacteriol.">
        <title>Complete genome sequence of the anaerobic, protein-degrading hyperthermophilic crenarchaeon Desulfurococcus kamchatkensis.</title>
        <authorList>
            <person name="Ravin N.V."/>
            <person name="Mardanov A.V."/>
            <person name="Beletsky A.V."/>
            <person name="Kublanov I.V."/>
            <person name="Kolganova T.V."/>
            <person name="Lebedinsky A.V."/>
            <person name="Chernyh N.A."/>
            <person name="Bonch-Osmolovskaya E.A."/>
            <person name="Skryabin K.G."/>
        </authorList>
    </citation>
    <scope>NUCLEOTIDE SEQUENCE [LARGE SCALE GENOMIC DNA]</scope>
    <source>
        <strain>DSM 18924 / JCM 16383 / VKM B-2413 / 1221n</strain>
    </source>
</reference>
<feature type="chain" id="PRO_1000184140" description="Large ribosomal subunit protein uL30">
    <location>
        <begin position="1"/>
        <end position="162"/>
    </location>
</feature>
<name>RL30_DESA1</name>
<comment type="subunit">
    <text evidence="1">Part of the 50S ribosomal subunit.</text>
</comment>
<comment type="similarity">
    <text evidence="1">Belongs to the universal ribosomal protein uL30 family.</text>
</comment>
<sequence length="162" mass="18485">MVKLYAILRIRGQSDTPPDVEYTLKLLRLHKKYHLVIYPAEQPGLEGMLEKVKDWVTWGEINKPTLVKLFKARGRASGGIRITDEYIAKVFAEQGIKDIEGFAEALLEGKLVLHKLENIVKPVFRLHPPRGGFDGSSKKPFNMKGELGYRGEKINELIERML</sequence>
<gene>
    <name evidence="1" type="primary">rpl30</name>
    <name type="ordered locus">DKAM_1154</name>
</gene>
<dbReference type="EMBL" id="CP001140">
    <property type="protein sequence ID" value="ACL11480.1"/>
    <property type="molecule type" value="Genomic_DNA"/>
</dbReference>
<dbReference type="RefSeq" id="WP_012608821.1">
    <property type="nucleotide sequence ID" value="NC_011766.1"/>
</dbReference>
<dbReference type="SMR" id="B8D5U9"/>
<dbReference type="STRING" id="490899.DKAM_1154"/>
<dbReference type="GeneID" id="7171243"/>
<dbReference type="KEGG" id="dka:DKAM_1154"/>
<dbReference type="eggNOG" id="arCOG04086">
    <property type="taxonomic scope" value="Archaea"/>
</dbReference>
<dbReference type="HOGENOM" id="CLU_055156_6_0_2"/>
<dbReference type="Proteomes" id="UP000006903">
    <property type="component" value="Chromosome"/>
</dbReference>
<dbReference type="GO" id="GO:0022625">
    <property type="term" value="C:cytosolic large ribosomal subunit"/>
    <property type="evidence" value="ECO:0007669"/>
    <property type="project" value="TreeGrafter"/>
</dbReference>
<dbReference type="GO" id="GO:0003723">
    <property type="term" value="F:RNA binding"/>
    <property type="evidence" value="ECO:0007669"/>
    <property type="project" value="TreeGrafter"/>
</dbReference>
<dbReference type="GO" id="GO:0003735">
    <property type="term" value="F:structural constituent of ribosome"/>
    <property type="evidence" value="ECO:0007669"/>
    <property type="project" value="InterPro"/>
</dbReference>
<dbReference type="GO" id="GO:0000463">
    <property type="term" value="P:maturation of LSU-rRNA from tricistronic rRNA transcript (SSU-rRNA, 5.8S rRNA, LSU-rRNA)"/>
    <property type="evidence" value="ECO:0007669"/>
    <property type="project" value="TreeGrafter"/>
</dbReference>
<dbReference type="GO" id="GO:0006412">
    <property type="term" value="P:translation"/>
    <property type="evidence" value="ECO:0007669"/>
    <property type="project" value="UniProtKB-UniRule"/>
</dbReference>
<dbReference type="CDD" id="cd01657">
    <property type="entry name" value="Ribosomal_L7_archeal_euk"/>
    <property type="match status" value="1"/>
</dbReference>
<dbReference type="Gene3D" id="1.10.15.30">
    <property type="match status" value="1"/>
</dbReference>
<dbReference type="Gene3D" id="3.30.1390.20">
    <property type="entry name" value="Ribosomal protein L30, ferredoxin-like fold domain"/>
    <property type="match status" value="1"/>
</dbReference>
<dbReference type="HAMAP" id="MF_01371_A">
    <property type="entry name" value="Ribosomal_uL30_A"/>
    <property type="match status" value="1"/>
</dbReference>
<dbReference type="InterPro" id="IPR036919">
    <property type="entry name" value="Ribo_uL30_ferredoxin-like_sf"/>
</dbReference>
<dbReference type="InterPro" id="IPR039699">
    <property type="entry name" value="Ribosomal_uL30"/>
</dbReference>
<dbReference type="InterPro" id="IPR005997">
    <property type="entry name" value="Ribosomal_uL30_arc"/>
</dbReference>
<dbReference type="InterPro" id="IPR035808">
    <property type="entry name" value="Ribosomal_uL30_euk_arc"/>
</dbReference>
<dbReference type="InterPro" id="IPR016082">
    <property type="entry name" value="Ribosomal_uL30_ferredoxin-like"/>
</dbReference>
<dbReference type="NCBIfam" id="NF004711">
    <property type="entry name" value="PRK06049.1"/>
    <property type="match status" value="1"/>
</dbReference>
<dbReference type="NCBIfam" id="TIGR01309">
    <property type="entry name" value="uL30_arch"/>
    <property type="match status" value="1"/>
</dbReference>
<dbReference type="PANTHER" id="PTHR11524">
    <property type="entry name" value="60S RIBOSOMAL PROTEIN L7"/>
    <property type="match status" value="1"/>
</dbReference>
<dbReference type="PANTHER" id="PTHR11524:SF16">
    <property type="entry name" value="LARGE RIBOSOMAL SUBUNIT PROTEIN UL30"/>
    <property type="match status" value="1"/>
</dbReference>
<dbReference type="Pfam" id="PF00327">
    <property type="entry name" value="Ribosomal_L30"/>
    <property type="match status" value="1"/>
</dbReference>
<dbReference type="SUPFAM" id="SSF55129">
    <property type="entry name" value="Ribosomal protein L30p/L7e"/>
    <property type="match status" value="1"/>
</dbReference>
<proteinExistence type="inferred from homology"/>
<accession>B8D5U9</accession>
<keyword id="KW-0687">Ribonucleoprotein</keyword>
<keyword id="KW-0689">Ribosomal protein</keyword>